<reference key="1">
    <citation type="journal article" date="1993" name="Nucleic Acids Res.">
        <title>Analysis of the Escherichia coli genome. III. DNA sequence of the region from 87.2 to 89.2 minutes.</title>
        <authorList>
            <person name="Plunkett G. III"/>
            <person name="Burland V."/>
            <person name="Daniels D.L."/>
            <person name="Blattner F.R."/>
        </authorList>
    </citation>
    <scope>NUCLEOTIDE SEQUENCE [LARGE SCALE GENOMIC DNA]</scope>
    <source>
        <strain>K12 / MG1655 / ATCC 47076</strain>
    </source>
</reference>
<reference key="2">
    <citation type="journal article" date="1997" name="Science">
        <title>The complete genome sequence of Escherichia coli K-12.</title>
        <authorList>
            <person name="Blattner F.R."/>
            <person name="Plunkett G. III"/>
            <person name="Bloch C.A."/>
            <person name="Perna N.T."/>
            <person name="Burland V."/>
            <person name="Riley M."/>
            <person name="Collado-Vides J."/>
            <person name="Glasner J.D."/>
            <person name="Rode C.K."/>
            <person name="Mayhew G.F."/>
            <person name="Gregor J."/>
            <person name="Davis N.W."/>
            <person name="Kirkpatrick H.A."/>
            <person name="Goeden M.A."/>
            <person name="Rose D.J."/>
            <person name="Mau B."/>
            <person name="Shao Y."/>
        </authorList>
    </citation>
    <scope>NUCLEOTIDE SEQUENCE [LARGE SCALE GENOMIC DNA]</scope>
    <source>
        <strain>K12 / MG1655 / ATCC 47076</strain>
    </source>
</reference>
<reference key="3">
    <citation type="journal article" date="2006" name="Mol. Syst. Biol.">
        <title>Highly accurate genome sequences of Escherichia coli K-12 strains MG1655 and W3110.</title>
        <authorList>
            <person name="Hayashi K."/>
            <person name="Morooka N."/>
            <person name="Yamamoto Y."/>
            <person name="Fujita K."/>
            <person name="Isono K."/>
            <person name="Choi S."/>
            <person name="Ohtsubo E."/>
            <person name="Baba T."/>
            <person name="Wanner B.L."/>
            <person name="Mori H."/>
            <person name="Horiuchi T."/>
        </authorList>
    </citation>
    <scope>NUCLEOTIDE SEQUENCE [LARGE SCALE GENOMIC DNA]</scope>
    <source>
        <strain>K12 / W3110 / ATCC 27325 / DSM 5911</strain>
    </source>
</reference>
<reference key="4">
    <citation type="journal article" date="2002" name="Mol. Microbiol.">
        <title>The universal stress protein paralogues of Escherichia coli are co-ordinately regulated and co-operate in the defence against DNA damage.</title>
        <authorList>
            <person name="Gustavsson N."/>
            <person name="Diez A."/>
            <person name="Nystroem T."/>
        </authorList>
    </citation>
    <scope>FUNCTION</scope>
    <scope>GENE NAME</scope>
    <scope>TRANSCRIPTIONAL REGULATION</scope>
    <source>
        <strain>K12 / MC4100 / ATCC 35695 / DSM 6574</strain>
    </source>
</reference>
<comment type="function">
    <text evidence="2">Required for resistance to DNA-damaging agents.</text>
</comment>
<comment type="subcellular location">
    <subcellularLocation>
        <location evidence="1">Cytoplasm</location>
    </subcellularLocation>
</comment>
<comment type="induction">
    <text evidence="2">During growth inhibition caused by the exhaustion of any of a variety of nutrients (carbon, nitrogen, phosphate, sulfate, required amino acid) or by the presence of a variety of toxic agents. Positively regulated by guanosine 3',5'-bisphosphate (ppGpp) and by a RecA/FtsK-dependent regulatory pathway.</text>
</comment>
<comment type="similarity">
    <text evidence="3">Belongs to the universal stress protein A family.</text>
</comment>
<sequence>MAYKHIGVAISGNEEDALLVNKALELARHNDAHLTLIHIDDGLSELYPGIYFPATEDILQLLKNKSDNKLYKLTKNIQWPKTKLRIERGEMPETLLEIMQKEQCDLLVCGHHHSFINRLMPAYRGMINKMSADLLIVPFIDK</sequence>
<keyword id="KW-0963">Cytoplasm</keyword>
<keyword id="KW-1185">Reference proteome</keyword>
<protein>
    <recommendedName>
        <fullName>Universal stress protein D</fullName>
    </recommendedName>
</protein>
<evidence type="ECO:0000250" key="1"/>
<evidence type="ECO:0000269" key="2">
    <source>
    </source>
</evidence>
<evidence type="ECO:0000305" key="3"/>
<accession>P0AAB8</accession>
<accession>P32163</accession>
<accession>Q2M8L9</accession>
<gene>
    <name type="primary">uspD</name>
    <name type="synonym">yiiT</name>
    <name type="ordered locus">b3923</name>
    <name type="ordered locus">JW3894</name>
</gene>
<feature type="chain" id="PRO_0000147413" description="Universal stress protein D">
    <location>
        <begin position="1"/>
        <end position="142"/>
    </location>
</feature>
<organism>
    <name type="scientific">Escherichia coli (strain K12)</name>
    <dbReference type="NCBI Taxonomy" id="83333"/>
    <lineage>
        <taxon>Bacteria</taxon>
        <taxon>Pseudomonadati</taxon>
        <taxon>Pseudomonadota</taxon>
        <taxon>Gammaproteobacteria</taxon>
        <taxon>Enterobacterales</taxon>
        <taxon>Enterobacteriaceae</taxon>
        <taxon>Escherichia</taxon>
    </lineage>
</organism>
<dbReference type="EMBL" id="L19201">
    <property type="protein sequence ID" value="AAB03055.1"/>
    <property type="molecule type" value="Genomic_DNA"/>
</dbReference>
<dbReference type="EMBL" id="U00096">
    <property type="protein sequence ID" value="AAC76905.1"/>
    <property type="molecule type" value="Genomic_DNA"/>
</dbReference>
<dbReference type="EMBL" id="AP009048">
    <property type="protein sequence ID" value="BAE77387.1"/>
    <property type="molecule type" value="Genomic_DNA"/>
</dbReference>
<dbReference type="PIR" id="S40866">
    <property type="entry name" value="S40866"/>
</dbReference>
<dbReference type="RefSeq" id="NP_418358.1">
    <property type="nucleotide sequence ID" value="NC_000913.3"/>
</dbReference>
<dbReference type="RefSeq" id="WP_000323556.1">
    <property type="nucleotide sequence ID" value="NZ_STEB01000017.1"/>
</dbReference>
<dbReference type="SMR" id="P0AAB8"/>
<dbReference type="BioGRID" id="4261396">
    <property type="interactions" value="8"/>
</dbReference>
<dbReference type="BioGRID" id="852712">
    <property type="interactions" value="5"/>
</dbReference>
<dbReference type="DIP" id="DIP-35856N"/>
<dbReference type="FunCoup" id="P0AAB8">
    <property type="interactions" value="125"/>
</dbReference>
<dbReference type="IntAct" id="P0AAB8">
    <property type="interactions" value="7"/>
</dbReference>
<dbReference type="STRING" id="511145.b3923"/>
<dbReference type="jPOST" id="P0AAB8"/>
<dbReference type="PaxDb" id="511145-b3923"/>
<dbReference type="EnsemblBacteria" id="AAC76905">
    <property type="protein sequence ID" value="AAC76905"/>
    <property type="gene ID" value="b3923"/>
</dbReference>
<dbReference type="GeneID" id="93777975"/>
<dbReference type="GeneID" id="948415"/>
<dbReference type="KEGG" id="ecj:JW3894"/>
<dbReference type="KEGG" id="eco:b3923"/>
<dbReference type="KEGG" id="ecoc:C3026_21205"/>
<dbReference type="PATRIC" id="fig|1411691.4.peg.2782"/>
<dbReference type="EchoBASE" id="EB1823"/>
<dbReference type="eggNOG" id="COG0589">
    <property type="taxonomic scope" value="Bacteria"/>
</dbReference>
<dbReference type="HOGENOM" id="CLU_049301_18_0_6"/>
<dbReference type="InParanoid" id="P0AAB8"/>
<dbReference type="OMA" id="RRMINKM"/>
<dbReference type="OrthoDB" id="9792500at2"/>
<dbReference type="PhylomeDB" id="P0AAB8"/>
<dbReference type="BioCyc" id="EcoCyc:EG11877-MONOMER"/>
<dbReference type="PRO" id="PR:P0AAB8"/>
<dbReference type="Proteomes" id="UP000000625">
    <property type="component" value="Chromosome"/>
</dbReference>
<dbReference type="GO" id="GO:0005829">
    <property type="term" value="C:cytosol"/>
    <property type="evidence" value="ECO:0000314"/>
    <property type="project" value="EcoCyc"/>
</dbReference>
<dbReference type="GO" id="GO:0042803">
    <property type="term" value="F:protein homodimerization activity"/>
    <property type="evidence" value="ECO:0000314"/>
    <property type="project" value="EcoCyc"/>
</dbReference>
<dbReference type="GO" id="GO:0042594">
    <property type="term" value="P:response to starvation"/>
    <property type="evidence" value="ECO:0000270"/>
    <property type="project" value="EcoCyc"/>
</dbReference>
<dbReference type="GO" id="GO:0006950">
    <property type="term" value="P:response to stress"/>
    <property type="evidence" value="ECO:0000318"/>
    <property type="project" value="GO_Central"/>
</dbReference>
<dbReference type="GO" id="GO:0000303">
    <property type="term" value="P:response to superoxide"/>
    <property type="evidence" value="ECO:0000315"/>
    <property type="project" value="EcoCyc"/>
</dbReference>
<dbReference type="GO" id="GO:0009411">
    <property type="term" value="P:response to UV"/>
    <property type="evidence" value="ECO:0000315"/>
    <property type="project" value="EcoCyc"/>
</dbReference>
<dbReference type="CDD" id="cd23657">
    <property type="entry name" value="USP-A-like"/>
    <property type="match status" value="1"/>
</dbReference>
<dbReference type="FunFam" id="3.40.50.620:FF:000065">
    <property type="entry name" value="Universal stress protein"/>
    <property type="match status" value="1"/>
</dbReference>
<dbReference type="Gene3D" id="3.40.50.620">
    <property type="entry name" value="HUPs"/>
    <property type="match status" value="1"/>
</dbReference>
<dbReference type="InterPro" id="IPR014729">
    <property type="entry name" value="Rossmann-like_a/b/a_fold"/>
</dbReference>
<dbReference type="InterPro" id="IPR006015">
    <property type="entry name" value="Universal_stress_UspA"/>
</dbReference>
<dbReference type="InterPro" id="IPR006016">
    <property type="entry name" value="UspA"/>
</dbReference>
<dbReference type="NCBIfam" id="NF007436">
    <property type="entry name" value="PRK09982.1"/>
    <property type="match status" value="1"/>
</dbReference>
<dbReference type="Pfam" id="PF00582">
    <property type="entry name" value="Usp"/>
    <property type="match status" value="1"/>
</dbReference>
<dbReference type="PIRSF" id="PIRSF006276">
    <property type="entry name" value="UspA"/>
    <property type="match status" value="1"/>
</dbReference>
<dbReference type="SUPFAM" id="SSF52402">
    <property type="entry name" value="Adenine nucleotide alpha hydrolases-like"/>
    <property type="match status" value="1"/>
</dbReference>
<name>USPD_ECOLI</name>
<proteinExistence type="evidence at transcript level"/>